<gene>
    <name evidence="1" type="primary">trmFO</name>
    <name type="ordered locus">Nham_1804</name>
</gene>
<feature type="chain" id="PRO_0000346367" description="Methylenetetrahydrofolate--tRNA-(uracil-5-)-methyltransferase TrmFO">
    <location>
        <begin position="1"/>
        <end position="477"/>
    </location>
</feature>
<feature type="binding site" evidence="1">
    <location>
        <begin position="15"/>
        <end position="20"/>
    </location>
    <ligand>
        <name>FAD</name>
        <dbReference type="ChEBI" id="CHEBI:57692"/>
    </ligand>
</feature>
<name>TRMFO_NITHX</name>
<keyword id="KW-0963">Cytoplasm</keyword>
<keyword id="KW-0274">FAD</keyword>
<keyword id="KW-0285">Flavoprotein</keyword>
<keyword id="KW-0489">Methyltransferase</keyword>
<keyword id="KW-0520">NAD</keyword>
<keyword id="KW-0521">NADP</keyword>
<keyword id="KW-1185">Reference proteome</keyword>
<keyword id="KW-0808">Transferase</keyword>
<keyword id="KW-0819">tRNA processing</keyword>
<evidence type="ECO:0000255" key="1">
    <source>
        <dbReference type="HAMAP-Rule" id="MF_01037"/>
    </source>
</evidence>
<dbReference type="EC" id="2.1.1.74" evidence="1"/>
<dbReference type="EMBL" id="CP000319">
    <property type="protein sequence ID" value="ABE62618.1"/>
    <property type="molecule type" value="Genomic_DNA"/>
</dbReference>
<dbReference type="RefSeq" id="WP_011510300.1">
    <property type="nucleotide sequence ID" value="NC_007964.1"/>
</dbReference>
<dbReference type="SMR" id="Q1QMC9"/>
<dbReference type="STRING" id="323097.Nham_1804"/>
<dbReference type="KEGG" id="nha:Nham_1804"/>
<dbReference type="eggNOG" id="COG1206">
    <property type="taxonomic scope" value="Bacteria"/>
</dbReference>
<dbReference type="HOGENOM" id="CLU_033057_1_0_5"/>
<dbReference type="OrthoDB" id="9803114at2"/>
<dbReference type="Proteomes" id="UP000001953">
    <property type="component" value="Chromosome"/>
</dbReference>
<dbReference type="GO" id="GO:0005829">
    <property type="term" value="C:cytosol"/>
    <property type="evidence" value="ECO:0007669"/>
    <property type="project" value="TreeGrafter"/>
</dbReference>
<dbReference type="GO" id="GO:0050660">
    <property type="term" value="F:flavin adenine dinucleotide binding"/>
    <property type="evidence" value="ECO:0007669"/>
    <property type="project" value="UniProtKB-UniRule"/>
</dbReference>
<dbReference type="GO" id="GO:0047151">
    <property type="term" value="F:tRNA (uracil(54)-C5)-methyltransferase activity, 5,10-methylenetetrahydrofolate-dependent"/>
    <property type="evidence" value="ECO:0007669"/>
    <property type="project" value="UniProtKB-UniRule"/>
</dbReference>
<dbReference type="GO" id="GO:0030488">
    <property type="term" value="P:tRNA methylation"/>
    <property type="evidence" value="ECO:0007669"/>
    <property type="project" value="TreeGrafter"/>
</dbReference>
<dbReference type="GO" id="GO:0002098">
    <property type="term" value="P:tRNA wobble uridine modification"/>
    <property type="evidence" value="ECO:0007669"/>
    <property type="project" value="TreeGrafter"/>
</dbReference>
<dbReference type="Gene3D" id="3.50.50.60">
    <property type="entry name" value="FAD/NAD(P)-binding domain"/>
    <property type="match status" value="2"/>
</dbReference>
<dbReference type="HAMAP" id="MF_01037">
    <property type="entry name" value="TrmFO"/>
    <property type="match status" value="1"/>
</dbReference>
<dbReference type="InterPro" id="IPR036188">
    <property type="entry name" value="FAD/NAD-bd_sf"/>
</dbReference>
<dbReference type="InterPro" id="IPR002218">
    <property type="entry name" value="MnmG-rel"/>
</dbReference>
<dbReference type="InterPro" id="IPR020595">
    <property type="entry name" value="MnmG-rel_CS"/>
</dbReference>
<dbReference type="InterPro" id="IPR040131">
    <property type="entry name" value="MnmG_N"/>
</dbReference>
<dbReference type="InterPro" id="IPR004417">
    <property type="entry name" value="TrmFO"/>
</dbReference>
<dbReference type="NCBIfam" id="TIGR00137">
    <property type="entry name" value="gid_trmFO"/>
    <property type="match status" value="1"/>
</dbReference>
<dbReference type="NCBIfam" id="NF003739">
    <property type="entry name" value="PRK05335.1"/>
    <property type="match status" value="1"/>
</dbReference>
<dbReference type="PANTHER" id="PTHR11806">
    <property type="entry name" value="GLUCOSE INHIBITED DIVISION PROTEIN A"/>
    <property type="match status" value="1"/>
</dbReference>
<dbReference type="PANTHER" id="PTHR11806:SF2">
    <property type="entry name" value="METHYLENETETRAHYDROFOLATE--TRNA-(URACIL-5-)-METHYLTRANSFERASE TRMFO"/>
    <property type="match status" value="1"/>
</dbReference>
<dbReference type="Pfam" id="PF01134">
    <property type="entry name" value="GIDA"/>
    <property type="match status" value="1"/>
</dbReference>
<dbReference type="SUPFAM" id="SSF51905">
    <property type="entry name" value="FAD/NAD(P)-binding domain"/>
    <property type="match status" value="1"/>
</dbReference>
<dbReference type="PROSITE" id="PS01281">
    <property type="entry name" value="GIDA_2"/>
    <property type="match status" value="1"/>
</dbReference>
<sequence>MTQIELSCSAVHIIGAGLAGSEAAWQVANHGVRVVLHEMRPHRMTAAHQTGGLAELVCSNSFRSDDAANNAVGLLHAEMRRLGSLIMRCADANQVPAGGALAVDRDGFSSAVTKALDDHPLIEINRTEVDGLPPADWRNVIVATGPLTSAPLAAAIRALTDESALAFFDAIAPIVHRDSIDMSKAWFQSRYDKVGPGGTGADYINCPMTEAQYHAFVDALIEGEKVDFKDWEIDTPYFDGCLPIEIMAERGRETLRHGPMKPVGLTNPHDPTVKPYAIVQLRQDNRLGTLYNIVGFQTKLKHGAQTRVFRTIPGLETAEFARLGGLHRNTFLNSPKLLDTQLRLRAEPRLRFAGQMTGCEGYVESAAIGLIAGLYAASDARARSLAAPPPTTALGALLGHITGGHIESIDAGPRSFQPMNINFGLFPPLANPPAKKPDGTRLRGNEKTIAKKQAISARALADLDRWIADALRVAAAA</sequence>
<reference key="1">
    <citation type="submission" date="2006-03" db="EMBL/GenBank/DDBJ databases">
        <title>Complete sequence of chromosome of Nitrobacter hamburgensis X14.</title>
        <authorList>
            <consortium name="US DOE Joint Genome Institute"/>
            <person name="Copeland A."/>
            <person name="Lucas S."/>
            <person name="Lapidus A."/>
            <person name="Barry K."/>
            <person name="Detter J.C."/>
            <person name="Glavina del Rio T."/>
            <person name="Hammon N."/>
            <person name="Israni S."/>
            <person name="Dalin E."/>
            <person name="Tice H."/>
            <person name="Pitluck S."/>
            <person name="Chain P."/>
            <person name="Malfatti S."/>
            <person name="Shin M."/>
            <person name="Vergez L."/>
            <person name="Schmutz J."/>
            <person name="Larimer F."/>
            <person name="Land M."/>
            <person name="Hauser L."/>
            <person name="Kyrpides N."/>
            <person name="Ivanova N."/>
            <person name="Ward B."/>
            <person name="Arp D."/>
            <person name="Klotz M."/>
            <person name="Stein L."/>
            <person name="O'Mullan G."/>
            <person name="Starkenburg S."/>
            <person name="Sayavedra L."/>
            <person name="Poret-Peterson A.T."/>
            <person name="Gentry M.E."/>
            <person name="Bruce D."/>
            <person name="Richardson P."/>
        </authorList>
    </citation>
    <scope>NUCLEOTIDE SEQUENCE [LARGE SCALE GENOMIC DNA]</scope>
    <source>
        <strain>DSM 10229 / NCIMB 13809 / X14</strain>
    </source>
</reference>
<comment type="function">
    <text evidence="1">Catalyzes the folate-dependent formation of 5-methyl-uridine at position 54 (M-5-U54) in all tRNAs.</text>
</comment>
<comment type="catalytic activity">
    <reaction evidence="1">
        <text>uridine(54) in tRNA + (6R)-5,10-methylene-5,6,7,8-tetrahydrofolate + NADH + H(+) = 5-methyluridine(54) in tRNA + (6S)-5,6,7,8-tetrahydrofolate + NAD(+)</text>
        <dbReference type="Rhea" id="RHEA:16873"/>
        <dbReference type="Rhea" id="RHEA-COMP:10167"/>
        <dbReference type="Rhea" id="RHEA-COMP:10193"/>
        <dbReference type="ChEBI" id="CHEBI:15378"/>
        <dbReference type="ChEBI" id="CHEBI:15636"/>
        <dbReference type="ChEBI" id="CHEBI:57453"/>
        <dbReference type="ChEBI" id="CHEBI:57540"/>
        <dbReference type="ChEBI" id="CHEBI:57945"/>
        <dbReference type="ChEBI" id="CHEBI:65315"/>
        <dbReference type="ChEBI" id="CHEBI:74447"/>
        <dbReference type="EC" id="2.1.1.74"/>
    </reaction>
</comment>
<comment type="catalytic activity">
    <reaction evidence="1">
        <text>uridine(54) in tRNA + (6R)-5,10-methylene-5,6,7,8-tetrahydrofolate + NADPH + H(+) = 5-methyluridine(54) in tRNA + (6S)-5,6,7,8-tetrahydrofolate + NADP(+)</text>
        <dbReference type="Rhea" id="RHEA:62372"/>
        <dbReference type="Rhea" id="RHEA-COMP:10167"/>
        <dbReference type="Rhea" id="RHEA-COMP:10193"/>
        <dbReference type="ChEBI" id="CHEBI:15378"/>
        <dbReference type="ChEBI" id="CHEBI:15636"/>
        <dbReference type="ChEBI" id="CHEBI:57453"/>
        <dbReference type="ChEBI" id="CHEBI:57783"/>
        <dbReference type="ChEBI" id="CHEBI:58349"/>
        <dbReference type="ChEBI" id="CHEBI:65315"/>
        <dbReference type="ChEBI" id="CHEBI:74447"/>
        <dbReference type="EC" id="2.1.1.74"/>
    </reaction>
</comment>
<comment type="cofactor">
    <cofactor evidence="1">
        <name>FAD</name>
        <dbReference type="ChEBI" id="CHEBI:57692"/>
    </cofactor>
</comment>
<comment type="subcellular location">
    <subcellularLocation>
        <location evidence="1">Cytoplasm</location>
    </subcellularLocation>
</comment>
<comment type="similarity">
    <text evidence="1">Belongs to the MnmG family. TrmFO subfamily.</text>
</comment>
<proteinExistence type="inferred from homology"/>
<organism>
    <name type="scientific">Nitrobacter hamburgensis (strain DSM 10229 / NCIMB 13809 / X14)</name>
    <dbReference type="NCBI Taxonomy" id="323097"/>
    <lineage>
        <taxon>Bacteria</taxon>
        <taxon>Pseudomonadati</taxon>
        <taxon>Pseudomonadota</taxon>
        <taxon>Alphaproteobacteria</taxon>
        <taxon>Hyphomicrobiales</taxon>
        <taxon>Nitrobacteraceae</taxon>
        <taxon>Nitrobacter</taxon>
    </lineage>
</organism>
<protein>
    <recommendedName>
        <fullName evidence="1">Methylenetetrahydrofolate--tRNA-(uracil-5-)-methyltransferase TrmFO</fullName>
        <ecNumber evidence="1">2.1.1.74</ecNumber>
    </recommendedName>
    <alternativeName>
        <fullName evidence="1">Folate-dependent tRNA (uracil-5-)-methyltransferase</fullName>
    </alternativeName>
    <alternativeName>
        <fullName evidence="1">Folate-dependent tRNA(M-5-U54)-methyltransferase</fullName>
    </alternativeName>
</protein>
<accession>Q1QMC9</accession>